<organism>
    <name type="scientific">Allorhizobium ampelinum (strain ATCC BAA-846 / DSM 112012 / S4)</name>
    <name type="common">Agrobacterium vitis (strain S4)</name>
    <dbReference type="NCBI Taxonomy" id="311402"/>
    <lineage>
        <taxon>Bacteria</taxon>
        <taxon>Pseudomonadati</taxon>
        <taxon>Pseudomonadota</taxon>
        <taxon>Alphaproteobacteria</taxon>
        <taxon>Hyphomicrobiales</taxon>
        <taxon>Rhizobiaceae</taxon>
        <taxon>Rhizobium/Agrobacterium group</taxon>
        <taxon>Allorhizobium</taxon>
        <taxon>Allorhizobium ampelinum</taxon>
    </lineage>
</organism>
<gene>
    <name evidence="1" type="primary">recA</name>
    <name type="ordered locus">Avi_2558</name>
</gene>
<reference key="1">
    <citation type="journal article" date="2009" name="J. Bacteriol.">
        <title>Genome sequences of three Agrobacterium biovars help elucidate the evolution of multichromosome genomes in bacteria.</title>
        <authorList>
            <person name="Slater S.C."/>
            <person name="Goldman B.S."/>
            <person name="Goodner B."/>
            <person name="Setubal J.C."/>
            <person name="Farrand S.K."/>
            <person name="Nester E.W."/>
            <person name="Burr T.J."/>
            <person name="Banta L."/>
            <person name="Dickerman A.W."/>
            <person name="Paulsen I."/>
            <person name="Otten L."/>
            <person name="Suen G."/>
            <person name="Welch R."/>
            <person name="Almeida N.F."/>
            <person name="Arnold F."/>
            <person name="Burton O.T."/>
            <person name="Du Z."/>
            <person name="Ewing A."/>
            <person name="Godsy E."/>
            <person name="Heisel S."/>
            <person name="Houmiel K.L."/>
            <person name="Jhaveri J."/>
            <person name="Lu J."/>
            <person name="Miller N.M."/>
            <person name="Norton S."/>
            <person name="Chen Q."/>
            <person name="Phoolcharoen W."/>
            <person name="Ohlin V."/>
            <person name="Ondrusek D."/>
            <person name="Pride N."/>
            <person name="Stricklin S.L."/>
            <person name="Sun J."/>
            <person name="Wheeler C."/>
            <person name="Wilson L."/>
            <person name="Zhu H."/>
            <person name="Wood D.W."/>
        </authorList>
    </citation>
    <scope>NUCLEOTIDE SEQUENCE [LARGE SCALE GENOMIC DNA]</scope>
    <source>
        <strain>ATCC BAA-846 / DSM 112012 / S4</strain>
    </source>
</reference>
<keyword id="KW-0067">ATP-binding</keyword>
<keyword id="KW-0963">Cytoplasm</keyword>
<keyword id="KW-0227">DNA damage</keyword>
<keyword id="KW-0233">DNA recombination</keyword>
<keyword id="KW-0234">DNA repair</keyword>
<keyword id="KW-0238">DNA-binding</keyword>
<keyword id="KW-0547">Nucleotide-binding</keyword>
<keyword id="KW-1185">Reference proteome</keyword>
<keyword id="KW-0742">SOS response</keyword>
<sequence>MSQNSLRLVEDKTVDKSKALEAALSQIERSFGKGSIMKLGANEKIVEVETVSTGSLSLDIALGIGGLPKGRIIEIYGPESSGKTTLALQTIAEAQKKGGVCAFVDAEHALDPVYARKLGVDLQNLLISQPDTGEQALEITDTLVRSGAIDVLVIDSVAALTPKAEIEGEMGDSLPGMQARLMSQALRKLTGSISRSNCMVVFINQIRMKIGVMFGSPETTTGGNALKFYASVRLDIRRIGAVKDREEIVGNQTRVKVVKNKMAPPFKQVEFDIMYGEGVSKTGELVDLGVKAGIVEKAGAWFSYNSQRLGQGRENAKIFLRDNPAVADEIETALRQNAGLIAERFLENGGPDANDSVGLDDA</sequence>
<protein>
    <recommendedName>
        <fullName evidence="1">Protein RecA</fullName>
    </recommendedName>
    <alternativeName>
        <fullName evidence="1">Recombinase A</fullName>
    </alternativeName>
</protein>
<name>RECA_ALLAM</name>
<feature type="chain" id="PRO_1000193285" description="Protein RecA">
    <location>
        <begin position="1"/>
        <end position="362"/>
    </location>
</feature>
<feature type="binding site" evidence="1">
    <location>
        <begin position="77"/>
        <end position="84"/>
    </location>
    <ligand>
        <name>ATP</name>
        <dbReference type="ChEBI" id="CHEBI:30616"/>
    </ligand>
</feature>
<accession>B9JX56</accession>
<evidence type="ECO:0000255" key="1">
    <source>
        <dbReference type="HAMAP-Rule" id="MF_00268"/>
    </source>
</evidence>
<proteinExistence type="inferred from homology"/>
<dbReference type="EMBL" id="CP000633">
    <property type="protein sequence ID" value="ACM36834.1"/>
    <property type="molecule type" value="Genomic_DNA"/>
</dbReference>
<dbReference type="RefSeq" id="WP_015916255.1">
    <property type="nucleotide sequence ID" value="NC_011989.1"/>
</dbReference>
<dbReference type="SMR" id="B9JX56"/>
<dbReference type="STRING" id="311402.Avi_2558"/>
<dbReference type="GeneID" id="60682858"/>
<dbReference type="KEGG" id="avi:Avi_2558"/>
<dbReference type="eggNOG" id="COG0468">
    <property type="taxonomic scope" value="Bacteria"/>
</dbReference>
<dbReference type="HOGENOM" id="CLU_040469_3_2_5"/>
<dbReference type="Proteomes" id="UP000001596">
    <property type="component" value="Chromosome 1"/>
</dbReference>
<dbReference type="GO" id="GO:0005829">
    <property type="term" value="C:cytosol"/>
    <property type="evidence" value="ECO:0007669"/>
    <property type="project" value="TreeGrafter"/>
</dbReference>
<dbReference type="GO" id="GO:0005524">
    <property type="term" value="F:ATP binding"/>
    <property type="evidence" value="ECO:0007669"/>
    <property type="project" value="UniProtKB-UniRule"/>
</dbReference>
<dbReference type="GO" id="GO:0016887">
    <property type="term" value="F:ATP hydrolysis activity"/>
    <property type="evidence" value="ECO:0007669"/>
    <property type="project" value="InterPro"/>
</dbReference>
<dbReference type="GO" id="GO:0140664">
    <property type="term" value="F:ATP-dependent DNA damage sensor activity"/>
    <property type="evidence" value="ECO:0007669"/>
    <property type="project" value="InterPro"/>
</dbReference>
<dbReference type="GO" id="GO:0003684">
    <property type="term" value="F:damaged DNA binding"/>
    <property type="evidence" value="ECO:0007669"/>
    <property type="project" value="UniProtKB-UniRule"/>
</dbReference>
<dbReference type="GO" id="GO:0003697">
    <property type="term" value="F:single-stranded DNA binding"/>
    <property type="evidence" value="ECO:0007669"/>
    <property type="project" value="UniProtKB-UniRule"/>
</dbReference>
<dbReference type="GO" id="GO:0006310">
    <property type="term" value="P:DNA recombination"/>
    <property type="evidence" value="ECO:0007669"/>
    <property type="project" value="UniProtKB-UniRule"/>
</dbReference>
<dbReference type="GO" id="GO:0006281">
    <property type="term" value="P:DNA repair"/>
    <property type="evidence" value="ECO:0007669"/>
    <property type="project" value="UniProtKB-UniRule"/>
</dbReference>
<dbReference type="GO" id="GO:0009432">
    <property type="term" value="P:SOS response"/>
    <property type="evidence" value="ECO:0007669"/>
    <property type="project" value="UniProtKB-UniRule"/>
</dbReference>
<dbReference type="CDD" id="cd00983">
    <property type="entry name" value="RecA"/>
    <property type="match status" value="1"/>
</dbReference>
<dbReference type="FunFam" id="3.40.50.300:FF:000087">
    <property type="entry name" value="Recombinase RecA"/>
    <property type="match status" value="1"/>
</dbReference>
<dbReference type="Gene3D" id="3.40.50.300">
    <property type="entry name" value="P-loop containing nucleotide triphosphate hydrolases"/>
    <property type="match status" value="1"/>
</dbReference>
<dbReference type="HAMAP" id="MF_00268">
    <property type="entry name" value="RecA"/>
    <property type="match status" value="1"/>
</dbReference>
<dbReference type="InterPro" id="IPR003593">
    <property type="entry name" value="AAA+_ATPase"/>
</dbReference>
<dbReference type="InterPro" id="IPR013765">
    <property type="entry name" value="DNA_recomb/repair_RecA"/>
</dbReference>
<dbReference type="InterPro" id="IPR020584">
    <property type="entry name" value="DNA_recomb/repair_RecA_CS"/>
</dbReference>
<dbReference type="InterPro" id="IPR027417">
    <property type="entry name" value="P-loop_NTPase"/>
</dbReference>
<dbReference type="InterPro" id="IPR049261">
    <property type="entry name" value="RecA-like_C"/>
</dbReference>
<dbReference type="InterPro" id="IPR049428">
    <property type="entry name" value="RecA-like_N"/>
</dbReference>
<dbReference type="InterPro" id="IPR020588">
    <property type="entry name" value="RecA_ATP-bd"/>
</dbReference>
<dbReference type="InterPro" id="IPR023400">
    <property type="entry name" value="RecA_C_sf"/>
</dbReference>
<dbReference type="InterPro" id="IPR020587">
    <property type="entry name" value="RecA_monomer-monomer_interface"/>
</dbReference>
<dbReference type="NCBIfam" id="TIGR02012">
    <property type="entry name" value="tigrfam_recA"/>
    <property type="match status" value="1"/>
</dbReference>
<dbReference type="PANTHER" id="PTHR45900:SF1">
    <property type="entry name" value="MITOCHONDRIAL DNA REPAIR PROTEIN RECA HOMOLOG-RELATED"/>
    <property type="match status" value="1"/>
</dbReference>
<dbReference type="PANTHER" id="PTHR45900">
    <property type="entry name" value="RECA"/>
    <property type="match status" value="1"/>
</dbReference>
<dbReference type="Pfam" id="PF00154">
    <property type="entry name" value="RecA"/>
    <property type="match status" value="1"/>
</dbReference>
<dbReference type="Pfam" id="PF21096">
    <property type="entry name" value="RecA_C"/>
    <property type="match status" value="1"/>
</dbReference>
<dbReference type="PRINTS" id="PR00142">
    <property type="entry name" value="RECA"/>
</dbReference>
<dbReference type="SMART" id="SM00382">
    <property type="entry name" value="AAA"/>
    <property type="match status" value="1"/>
</dbReference>
<dbReference type="SUPFAM" id="SSF52540">
    <property type="entry name" value="P-loop containing nucleoside triphosphate hydrolases"/>
    <property type="match status" value="1"/>
</dbReference>
<dbReference type="SUPFAM" id="SSF54752">
    <property type="entry name" value="RecA protein, C-terminal domain"/>
    <property type="match status" value="1"/>
</dbReference>
<dbReference type="PROSITE" id="PS00321">
    <property type="entry name" value="RECA_1"/>
    <property type="match status" value="1"/>
</dbReference>
<dbReference type="PROSITE" id="PS50162">
    <property type="entry name" value="RECA_2"/>
    <property type="match status" value="1"/>
</dbReference>
<dbReference type="PROSITE" id="PS50163">
    <property type="entry name" value="RECA_3"/>
    <property type="match status" value="1"/>
</dbReference>
<comment type="function">
    <text evidence="1">Can catalyze the hydrolysis of ATP in the presence of single-stranded DNA, the ATP-dependent uptake of single-stranded DNA by duplex DNA, and the ATP-dependent hybridization of homologous single-stranded DNAs. It interacts with LexA causing its activation and leading to its autocatalytic cleavage.</text>
</comment>
<comment type="subcellular location">
    <subcellularLocation>
        <location evidence="1">Cytoplasm</location>
    </subcellularLocation>
</comment>
<comment type="similarity">
    <text evidence="1">Belongs to the RecA family.</text>
</comment>